<proteinExistence type="evidence at protein level"/>
<keyword id="KW-0002">3D-structure</keyword>
<keyword id="KW-0025">Alternative splicing</keyword>
<keyword id="KW-0158">Chromosome</keyword>
<keyword id="KW-0227">DNA damage</keyword>
<keyword id="KW-0234">DNA repair</keyword>
<keyword id="KW-0238">DNA-binding</keyword>
<keyword id="KW-0539">Nucleus</keyword>
<keyword id="KW-1185">Reference proteome</keyword>
<keyword id="KW-0677">Repeat</keyword>
<keyword id="KW-0833">Ubl conjugation pathway</keyword>
<keyword id="KW-0853">WD repeat</keyword>
<protein>
    <recommendedName>
        <fullName>DNA damage-binding protein 2</fullName>
    </recommendedName>
    <alternativeName>
        <fullName>Damage-specific DNA-binding protein 2</fullName>
    </alternativeName>
</protein>
<gene>
    <name type="primary">ddb2</name>
    <name type="ORF">si:dkey-45f10.3</name>
</gene>
<comment type="function">
    <text evidence="1">Protein, which is both involved in DNA repair and protein ubiquitination, as part of the UV-DDB complex and DCX (DDB1-CUL4-X-box) complexes, respectively. Core component of the UV-DDB complex (UV-damaged DNA-binding protein complex), a complex that recognizes UV-induced DNA damage and recruit proteins of the nucleotide excision repair pathway (the NER pathway) to initiate DNA repair. The UV-DDB complex preferentially binds to cyclobutane pyrimidine dimers (CPD), 6-4 photoproducts (6-4 PP), apurinic sites and short mismatches. Also functions as the substrate recognition module for the DCX (DDB2-CUL4-X-box) E3 ubiquitin-protein ligase complex DDB2-CUL4-ROC1 (also known as CUL4-DDB-ROC1 and CUL4-DDB-RBX1). The DDB2-CUL4-ROC1 complex may ubiquitinate histone H2A, histone H3 and histone H4 at sites of UV-induced DNA damage. The ubiquitination of histones may facilitate their removal from the nucleosome and promote subsequent DNA repair.</text>
</comment>
<comment type="pathway">
    <text>Protein modification; protein ubiquitination.</text>
</comment>
<comment type="subunit">
    <text evidence="1 3 4">Component of the UV-DDB complex which includes ddb1 and ddb2 (PubMed:19109893). Component of a DCX (DDB1-CUL4-X-box) E3 ubiquitin-protein ligase complex that includes cul4a, or cul4b, ddb1, ddb2 and rbx1 (PubMed:22118460). A large number of other DCX complexes may also exist in which an alternate substrate targeting subunit replaces ddb2. These targeting subunits are generally known as DCAF (ddb1- and cul4-associated factor) or CDW (cul4-ddb1-associated WD40-repeat) proteins (By similarity).</text>
</comment>
<comment type="subcellular location">
    <subcellularLocation>
        <location evidence="1">Nucleus</location>
    </subcellularLocation>
    <subcellularLocation>
        <location evidence="1">Chromosome</location>
    </subcellularLocation>
    <text evidence="1">Accumulates at sites of DNA damage following UV irradiation.</text>
</comment>
<comment type="alternative products">
    <event type="alternative splicing"/>
    <isoform>
        <id>Q2YDS1-1</id>
        <name>1</name>
        <sequence type="displayed"/>
    </isoform>
    <isoform>
        <id>Q2YDS1-2</id>
        <name>2</name>
        <sequence type="described" ref="VSP_035462"/>
    </isoform>
</comment>
<comment type="domain">
    <text evidence="1">The DWD box is required for interaction with ddb1.</text>
</comment>
<comment type="domain">
    <text evidence="3">Interblade loops of the WD repeat region mediate most of the interaction with DNA. A hairpin between blades 5 and 6 inserts into DNA minor groove and mediates recognition of lesions and separation of the damaged and undamaged strands.</text>
</comment>
<comment type="similarity">
    <text evidence="5">Belongs to the WD repeat DDB2/WDR76 family.</text>
</comment>
<comment type="sequence caution" evidence="5">
    <conflict type="erroneous initiation">
        <sequence resource="EMBL-CDS" id="AAI10097"/>
    </conflict>
</comment>
<comment type="sequence caution" evidence="5">
    <conflict type="erroneous gene model prediction">
        <sequence resource="EMBL-CDS" id="CAK11059"/>
    </conflict>
</comment>
<comment type="sequence caution" evidence="5">
    <conflict type="erroneous gene model prediction">
        <sequence resource="EMBL-CDS" id="CAK11060"/>
    </conflict>
</comment>
<accession>Q2YDS1</accession>
<accession>Q1LUF7</accession>
<accession>Q1LUF8</accession>
<organism>
    <name type="scientific">Danio rerio</name>
    <name type="common">Zebrafish</name>
    <name type="synonym">Brachydanio rerio</name>
    <dbReference type="NCBI Taxonomy" id="7955"/>
    <lineage>
        <taxon>Eukaryota</taxon>
        <taxon>Metazoa</taxon>
        <taxon>Chordata</taxon>
        <taxon>Craniata</taxon>
        <taxon>Vertebrata</taxon>
        <taxon>Euteleostomi</taxon>
        <taxon>Actinopterygii</taxon>
        <taxon>Neopterygii</taxon>
        <taxon>Teleostei</taxon>
        <taxon>Ostariophysi</taxon>
        <taxon>Cypriniformes</taxon>
        <taxon>Danionidae</taxon>
        <taxon>Danioninae</taxon>
        <taxon>Danio</taxon>
    </lineage>
</organism>
<feature type="chain" id="PRO_0000351090" description="DNA damage-binding protein 2">
    <location>
        <begin position="1"/>
        <end position="496"/>
    </location>
</feature>
<feature type="repeat" description="WD 1">
    <location>
        <begin position="118"/>
        <end position="153"/>
    </location>
</feature>
<feature type="repeat" description="WD 2">
    <location>
        <begin position="161"/>
        <end position="196"/>
    </location>
</feature>
<feature type="repeat" description="WD 3">
    <location>
        <begin position="205"/>
        <end position="240"/>
    </location>
</feature>
<feature type="repeat" description="WD 4">
    <location>
        <begin position="246"/>
        <end position="289"/>
    </location>
</feature>
<feature type="repeat" description="WD 5">
    <location>
        <begin position="292"/>
        <end position="332"/>
    </location>
</feature>
<feature type="repeat" description="WD 6">
    <location>
        <begin position="346"/>
        <end position="386"/>
    </location>
</feature>
<feature type="repeat" description="WD 7">
    <location>
        <begin position="396"/>
        <end position="420"/>
    </location>
</feature>
<feature type="region of interest" description="Disordered" evidence="2">
    <location>
        <begin position="1"/>
        <end position="51"/>
    </location>
</feature>
<feature type="region of interest" description="Photolesion recognition" evidence="3">
    <location>
        <begin position="337"/>
        <end position="339"/>
    </location>
</feature>
<feature type="region of interest" description="Disordered" evidence="2">
    <location>
        <begin position="435"/>
        <end position="496"/>
    </location>
</feature>
<feature type="short sequence motif" description="DWD box" evidence="1">
    <location>
        <begin position="258"/>
        <end position="276"/>
    </location>
</feature>
<feature type="compositionally biased region" description="Polar residues" evidence="2">
    <location>
        <begin position="7"/>
        <end position="19"/>
    </location>
</feature>
<feature type="compositionally biased region" description="Basic residues" evidence="2">
    <location>
        <begin position="35"/>
        <end position="46"/>
    </location>
</feature>
<feature type="compositionally biased region" description="Low complexity" evidence="2">
    <location>
        <begin position="445"/>
        <end position="455"/>
    </location>
</feature>
<feature type="compositionally biased region" description="Basic and acidic residues" evidence="2">
    <location>
        <begin position="456"/>
        <end position="468"/>
    </location>
</feature>
<feature type="compositionally biased region" description="Basic and acidic residues" evidence="2">
    <location>
        <begin position="478"/>
        <end position="490"/>
    </location>
</feature>
<feature type="splice variant" id="VSP_035462" description="In isoform 2." evidence="5">
    <original>MGPGDAITGMKFNQFNTNQLFVSSIWGATTLRDFSGSVIQVFAKTDSWD</original>
    <variation>KGAGDFIGCPRDSSKVFVASGDGTVSVQSFEGLQSQILSRTPDCGHDHHDLC</variation>
    <location>
        <begin position="155"/>
        <end position="203"/>
    </location>
</feature>
<feature type="sequence conflict" description="In Ref. 2; AAI10097." evidence="5" ref="2">
    <original>S</original>
    <variation>T</variation>
    <location>
        <position position="45"/>
    </location>
</feature>
<feature type="sequence conflict" description="In Ref. 2; AAI10097." evidence="5" ref="2">
    <original>L</original>
    <variation>Q</variation>
    <location>
        <position position="146"/>
    </location>
</feature>
<feature type="sequence conflict" description="In Ref. 2; AAI10097." evidence="5" ref="2">
    <original>W</original>
    <variation>R</variation>
    <location>
        <position position="180"/>
    </location>
</feature>
<feature type="helix" evidence="8">
    <location>
        <begin position="71"/>
        <end position="79"/>
    </location>
</feature>
<feature type="helix" evidence="8">
    <location>
        <begin position="85"/>
        <end position="100"/>
    </location>
</feature>
<feature type="strand" evidence="8">
    <location>
        <begin position="104"/>
        <end position="109"/>
    </location>
</feature>
<feature type="strand" evidence="8">
    <location>
        <begin position="116"/>
        <end position="121"/>
    </location>
</feature>
<feature type="strand" evidence="8">
    <location>
        <begin position="128"/>
        <end position="134"/>
    </location>
</feature>
<feature type="strand" evidence="8">
    <location>
        <begin position="138"/>
        <end position="142"/>
    </location>
</feature>
<feature type="strand" evidence="8">
    <location>
        <begin position="149"/>
        <end position="152"/>
    </location>
</feature>
<feature type="strand" evidence="7">
    <location>
        <begin position="156"/>
        <end position="158"/>
    </location>
</feature>
<feature type="strand" evidence="8">
    <location>
        <begin position="160"/>
        <end position="167"/>
    </location>
</feature>
<feature type="strand" evidence="8">
    <location>
        <begin position="170"/>
        <end position="178"/>
    </location>
</feature>
<feature type="turn" evidence="8">
    <location>
        <begin position="179"/>
        <end position="181"/>
    </location>
</feature>
<feature type="strand" evidence="8">
    <location>
        <begin position="182"/>
        <end position="187"/>
    </location>
</feature>
<feature type="turn" evidence="9">
    <location>
        <begin position="188"/>
        <end position="190"/>
    </location>
</feature>
<feature type="strand" evidence="8">
    <location>
        <begin position="192"/>
        <end position="197"/>
    </location>
</feature>
<feature type="strand" evidence="8">
    <location>
        <begin position="206"/>
        <end position="212"/>
    </location>
</feature>
<feature type="turn" evidence="8">
    <location>
        <begin position="213"/>
        <end position="216"/>
    </location>
</feature>
<feature type="strand" evidence="8">
    <location>
        <begin position="217"/>
        <end position="222"/>
    </location>
</feature>
<feature type="strand" evidence="8">
    <location>
        <begin position="225"/>
        <end position="231"/>
    </location>
</feature>
<feature type="strand" evidence="8">
    <location>
        <begin position="236"/>
        <end position="241"/>
    </location>
</feature>
<feature type="strand" evidence="8">
    <location>
        <begin position="243"/>
        <end position="245"/>
    </location>
</feature>
<feature type="strand" evidence="8">
    <location>
        <begin position="247"/>
        <end position="252"/>
    </location>
</feature>
<feature type="strand" evidence="9">
    <location>
        <begin position="254"/>
        <end position="256"/>
    </location>
</feature>
<feature type="strand" evidence="8">
    <location>
        <begin position="259"/>
        <end position="264"/>
    </location>
</feature>
<feature type="strand" evidence="8">
    <location>
        <begin position="267"/>
        <end position="273"/>
    </location>
</feature>
<feature type="helix" evidence="8">
    <location>
        <begin position="274"/>
        <end position="276"/>
    </location>
</feature>
<feature type="strand" evidence="6">
    <location>
        <begin position="279"/>
        <end position="281"/>
    </location>
</feature>
<feature type="strand" evidence="8">
    <location>
        <begin position="283"/>
        <end position="288"/>
    </location>
</feature>
<feature type="strand" evidence="8">
    <location>
        <begin position="293"/>
        <end position="298"/>
    </location>
</feature>
<feature type="turn" evidence="8">
    <location>
        <begin position="300"/>
        <end position="302"/>
    </location>
</feature>
<feature type="strand" evidence="8">
    <location>
        <begin position="305"/>
        <end position="319"/>
    </location>
</feature>
<feature type="strand" evidence="6">
    <location>
        <begin position="322"/>
        <end position="325"/>
    </location>
</feature>
<feature type="strand" evidence="8">
    <location>
        <begin position="327"/>
        <end position="331"/>
    </location>
</feature>
<feature type="strand" evidence="8">
    <location>
        <begin position="349"/>
        <end position="357"/>
    </location>
</feature>
<feature type="turn" evidence="8">
    <location>
        <begin position="362"/>
        <end position="364"/>
    </location>
</feature>
<feature type="strand" evidence="8">
    <location>
        <begin position="372"/>
        <end position="376"/>
    </location>
</feature>
<feature type="turn" evidence="8">
    <location>
        <begin position="377"/>
        <end position="379"/>
    </location>
</feature>
<feature type="strand" evidence="8">
    <location>
        <begin position="382"/>
        <end position="386"/>
    </location>
</feature>
<feature type="strand" evidence="8">
    <location>
        <begin position="397"/>
        <end position="400"/>
    </location>
</feature>
<feature type="strand" evidence="8">
    <location>
        <begin position="404"/>
        <end position="411"/>
    </location>
</feature>
<feature type="strand" evidence="8">
    <location>
        <begin position="414"/>
        <end position="419"/>
    </location>
</feature>
<sequence>MARGRAQTDSAASKQTKTVNSKKRPNEETPQPSTKKLKAKQQHKSKQKEETYIQASVKWTGGQKKVGQTSILHYIYKSSLGQSIHAQLRQCLQEPFIRSLKSYKLHRTASPFDRRVTSLEWHPTHPTTVAVGSKGGDIILWDYDVLNKTSFIQGMGPGDAITGMKFNQFNTNQLFVSSIWGATTLRDFSGSVIQVFAKTDSWDYWYCCVDVSVSRQMLATGDSTGRLLLLGLDGHEIFKEKLHKAKVTHAEFNPRCDWLMATSSVDATVKLWDLRNIKDKNSYIAEMPHEKPVNAAYFNPTDSTKLLTTDQRNEIRVYSSYDWSKPDQIIIHPHRQFQHLTPIKATWHPMYDLIVAGRYPDDQLLLNDKRTIDIYDANSGGLVHQLRDPNAAGIISLNKFSPTGDVLASGMGFNILIWNREDTLSSVNRKQTIVTGEDVGGRAGGSRSQRSSQQRPSRDRRAAADEAKLKKKLSATETKSKTKSKTESKTSKSKKK</sequence>
<name>DDB2_DANRE</name>
<dbReference type="EMBL" id="BX942814">
    <property type="protein sequence ID" value="CAK11059.1"/>
    <property type="status" value="ALT_SEQ"/>
    <property type="molecule type" value="Genomic_DNA"/>
</dbReference>
<dbReference type="EMBL" id="BX942814">
    <property type="protein sequence ID" value="CAK11060.1"/>
    <property type="status" value="ALT_SEQ"/>
    <property type="molecule type" value="Genomic_DNA"/>
</dbReference>
<dbReference type="EMBL" id="BC110096">
    <property type="protein sequence ID" value="AAI10097.1"/>
    <property type="status" value="ALT_INIT"/>
    <property type="molecule type" value="mRNA"/>
</dbReference>
<dbReference type="PDB" id="3EI1">
    <property type="method" value="X-ray"/>
    <property type="resolution" value="2.80 A"/>
    <property type="chains" value="B=60-423"/>
</dbReference>
<dbReference type="PDB" id="3EI2">
    <property type="method" value="X-ray"/>
    <property type="resolution" value="2.60 A"/>
    <property type="chains" value="B=60-423"/>
</dbReference>
<dbReference type="PDB" id="3EI3">
    <property type="method" value="X-ray"/>
    <property type="resolution" value="2.30 A"/>
    <property type="chains" value="B=60-423"/>
</dbReference>
<dbReference type="PDB" id="4A08">
    <property type="method" value="X-ray"/>
    <property type="resolution" value="3.00 A"/>
    <property type="chains" value="B=60-423"/>
</dbReference>
<dbReference type="PDB" id="4A09">
    <property type="method" value="X-ray"/>
    <property type="resolution" value="3.10 A"/>
    <property type="chains" value="B=60-423"/>
</dbReference>
<dbReference type="PDB" id="4A0A">
    <property type="method" value="X-ray"/>
    <property type="resolution" value="3.60 A"/>
    <property type="chains" value="B=60-423"/>
</dbReference>
<dbReference type="PDB" id="4A0B">
    <property type="method" value="X-ray"/>
    <property type="resolution" value="3.80 A"/>
    <property type="chains" value="B/D=60-423"/>
</dbReference>
<dbReference type="PDB" id="4A0K">
    <property type="method" value="X-ray"/>
    <property type="resolution" value="5.93 A"/>
    <property type="chains" value="D=60-423"/>
</dbReference>
<dbReference type="PDB" id="4A0L">
    <property type="method" value="X-ray"/>
    <property type="resolution" value="7.40 A"/>
    <property type="chains" value="B/D=60-423"/>
</dbReference>
<dbReference type="PDBsum" id="3EI1"/>
<dbReference type="PDBsum" id="3EI2"/>
<dbReference type="PDBsum" id="3EI3"/>
<dbReference type="PDBsum" id="4A08"/>
<dbReference type="PDBsum" id="4A09"/>
<dbReference type="PDBsum" id="4A0A"/>
<dbReference type="PDBsum" id="4A0B"/>
<dbReference type="PDBsum" id="4A0K"/>
<dbReference type="PDBsum" id="4A0L"/>
<dbReference type="EMDB" id="EMD-3316"/>
<dbReference type="SMR" id="Q2YDS1"/>
<dbReference type="DIP" id="DIP-53463N"/>
<dbReference type="FunCoup" id="Q2YDS1">
    <property type="interactions" value="512"/>
</dbReference>
<dbReference type="IntAct" id="Q2YDS1">
    <property type="interactions" value="2"/>
</dbReference>
<dbReference type="STRING" id="7955.ENSDARP00000091438"/>
<dbReference type="PaxDb" id="7955-ENSDARP00000091438"/>
<dbReference type="Ensembl" id="ENSDART00000060302">
    <molecule id="Q2YDS1-1"/>
    <property type="protein sequence ID" value="ENSDARP00000060301"/>
    <property type="gene ID" value="ENSDARG00000041140"/>
</dbReference>
<dbReference type="Ensembl" id="ENSDART00000180316">
    <molecule id="Q2YDS1-1"/>
    <property type="protein sequence ID" value="ENSDARP00000152759"/>
    <property type="gene ID" value="ENSDARG00000114723"/>
</dbReference>
<dbReference type="AGR" id="ZFIN:ZDB-GENE-050419-169"/>
<dbReference type="ZFIN" id="ZDB-GENE-050419-169">
    <property type="gene designation" value="ddb2"/>
</dbReference>
<dbReference type="eggNOG" id="KOG4328">
    <property type="taxonomic scope" value="Eukaryota"/>
</dbReference>
<dbReference type="HOGENOM" id="CLU_036401_0_0_1"/>
<dbReference type="InParanoid" id="Q2YDS1"/>
<dbReference type="OMA" id="CGHEHHN"/>
<dbReference type="PhylomeDB" id="Q2YDS1"/>
<dbReference type="TreeFam" id="TF331587"/>
<dbReference type="Reactome" id="R-DRE-5696394">
    <property type="pathway name" value="DNA Damage Recognition in GG-NER"/>
</dbReference>
<dbReference type="Reactome" id="R-DRE-5696395">
    <property type="pathway name" value="Formation of Incision Complex in GG-NER"/>
</dbReference>
<dbReference type="Reactome" id="R-DRE-5696400">
    <property type="pathway name" value="Dual Incision in GG-NER"/>
</dbReference>
<dbReference type="Reactome" id="R-DRE-8951664">
    <property type="pathway name" value="Neddylation"/>
</dbReference>
<dbReference type="SignaLink" id="Q2YDS1"/>
<dbReference type="UniPathway" id="UPA00143"/>
<dbReference type="EvolutionaryTrace" id="Q2YDS1"/>
<dbReference type="PRO" id="PR:Q2YDS1"/>
<dbReference type="Proteomes" id="UP000000437">
    <property type="component" value="Unplaced"/>
</dbReference>
<dbReference type="Bgee" id="ENSDARG00000041140">
    <property type="expression patterns" value="Expressed in tail and 22 other cell types or tissues"/>
</dbReference>
<dbReference type="ExpressionAtlas" id="Q2YDS1">
    <property type="expression patterns" value="baseline and differential"/>
</dbReference>
<dbReference type="GO" id="GO:0080008">
    <property type="term" value="C:Cul4-RING E3 ubiquitin ligase complex"/>
    <property type="evidence" value="ECO:0007669"/>
    <property type="project" value="InterPro"/>
</dbReference>
<dbReference type="GO" id="GO:0005634">
    <property type="term" value="C:nucleus"/>
    <property type="evidence" value="ECO:0000318"/>
    <property type="project" value="GO_Central"/>
</dbReference>
<dbReference type="GO" id="GO:0090734">
    <property type="term" value="C:site of DNA damage"/>
    <property type="evidence" value="ECO:0000250"/>
    <property type="project" value="UniProtKB"/>
</dbReference>
<dbReference type="GO" id="GO:0003684">
    <property type="term" value="F:damaged DNA binding"/>
    <property type="evidence" value="ECO:0007669"/>
    <property type="project" value="InterPro"/>
</dbReference>
<dbReference type="GO" id="GO:0006281">
    <property type="term" value="P:DNA repair"/>
    <property type="evidence" value="ECO:0000318"/>
    <property type="project" value="GO_Central"/>
</dbReference>
<dbReference type="GO" id="GO:0006289">
    <property type="term" value="P:nucleotide-excision repair"/>
    <property type="evidence" value="ECO:0000250"/>
    <property type="project" value="UniProtKB"/>
</dbReference>
<dbReference type="GO" id="GO:0016567">
    <property type="term" value="P:protein ubiquitination"/>
    <property type="evidence" value="ECO:0007669"/>
    <property type="project" value="UniProtKB-UniPathway"/>
</dbReference>
<dbReference type="GO" id="GO:0009411">
    <property type="term" value="P:response to UV"/>
    <property type="evidence" value="ECO:0000318"/>
    <property type="project" value="GO_Central"/>
</dbReference>
<dbReference type="FunFam" id="1.10.287.3280:FF:000001">
    <property type="entry name" value="DNA damage-binding protein 2"/>
    <property type="match status" value="1"/>
</dbReference>
<dbReference type="FunFam" id="2.130.10.10:FF:000161">
    <property type="entry name" value="DNA damage-binding protein 2"/>
    <property type="match status" value="1"/>
</dbReference>
<dbReference type="Gene3D" id="1.10.287.3280">
    <property type="match status" value="1"/>
</dbReference>
<dbReference type="Gene3D" id="2.130.10.10">
    <property type="entry name" value="YVTN repeat-like/Quinoprotein amine dehydrogenase"/>
    <property type="match status" value="1"/>
</dbReference>
<dbReference type="InterPro" id="IPR033312">
    <property type="entry name" value="DDB2"/>
</dbReference>
<dbReference type="InterPro" id="IPR015943">
    <property type="entry name" value="WD40/YVTN_repeat-like_dom_sf"/>
</dbReference>
<dbReference type="InterPro" id="IPR019775">
    <property type="entry name" value="WD40_repeat_CS"/>
</dbReference>
<dbReference type="InterPro" id="IPR036322">
    <property type="entry name" value="WD40_repeat_dom_sf"/>
</dbReference>
<dbReference type="InterPro" id="IPR001680">
    <property type="entry name" value="WD40_rpt"/>
</dbReference>
<dbReference type="PANTHER" id="PTHR15169">
    <property type="entry name" value="DAMAGE-SPECIFIC DNA BINDING PROTEIN 2"/>
    <property type="match status" value="1"/>
</dbReference>
<dbReference type="PANTHER" id="PTHR15169:SF0">
    <property type="entry name" value="DNA DAMAGE-BINDING PROTEIN 2"/>
    <property type="match status" value="1"/>
</dbReference>
<dbReference type="Pfam" id="PF00400">
    <property type="entry name" value="WD40"/>
    <property type="match status" value="2"/>
</dbReference>
<dbReference type="SMART" id="SM00320">
    <property type="entry name" value="WD40"/>
    <property type="match status" value="5"/>
</dbReference>
<dbReference type="SUPFAM" id="SSF50978">
    <property type="entry name" value="WD40 repeat-like"/>
    <property type="match status" value="1"/>
</dbReference>
<dbReference type="PROSITE" id="PS00678">
    <property type="entry name" value="WD_REPEATS_1"/>
    <property type="match status" value="1"/>
</dbReference>
<dbReference type="PROSITE" id="PS50082">
    <property type="entry name" value="WD_REPEATS_2"/>
    <property type="match status" value="1"/>
</dbReference>
<dbReference type="PROSITE" id="PS50294">
    <property type="entry name" value="WD_REPEATS_REGION"/>
    <property type="match status" value="1"/>
</dbReference>
<reference key="1">
    <citation type="journal article" date="2013" name="Nature">
        <title>The zebrafish reference genome sequence and its relationship to the human genome.</title>
        <authorList>
            <person name="Howe K."/>
            <person name="Clark M.D."/>
            <person name="Torroja C.F."/>
            <person name="Torrance J."/>
            <person name="Berthelot C."/>
            <person name="Muffato M."/>
            <person name="Collins J.E."/>
            <person name="Humphray S."/>
            <person name="McLaren K."/>
            <person name="Matthews L."/>
            <person name="McLaren S."/>
            <person name="Sealy I."/>
            <person name="Caccamo M."/>
            <person name="Churcher C."/>
            <person name="Scott C."/>
            <person name="Barrett J.C."/>
            <person name="Koch R."/>
            <person name="Rauch G.J."/>
            <person name="White S."/>
            <person name="Chow W."/>
            <person name="Kilian B."/>
            <person name="Quintais L.T."/>
            <person name="Guerra-Assuncao J.A."/>
            <person name="Zhou Y."/>
            <person name="Gu Y."/>
            <person name="Yen J."/>
            <person name="Vogel J.H."/>
            <person name="Eyre T."/>
            <person name="Redmond S."/>
            <person name="Banerjee R."/>
            <person name="Chi J."/>
            <person name="Fu B."/>
            <person name="Langley E."/>
            <person name="Maguire S.F."/>
            <person name="Laird G.K."/>
            <person name="Lloyd D."/>
            <person name="Kenyon E."/>
            <person name="Donaldson S."/>
            <person name="Sehra H."/>
            <person name="Almeida-King J."/>
            <person name="Loveland J."/>
            <person name="Trevanion S."/>
            <person name="Jones M."/>
            <person name="Quail M."/>
            <person name="Willey D."/>
            <person name="Hunt A."/>
            <person name="Burton J."/>
            <person name="Sims S."/>
            <person name="McLay K."/>
            <person name="Plumb B."/>
            <person name="Davis J."/>
            <person name="Clee C."/>
            <person name="Oliver K."/>
            <person name="Clark R."/>
            <person name="Riddle C."/>
            <person name="Elliot D."/>
            <person name="Threadgold G."/>
            <person name="Harden G."/>
            <person name="Ware D."/>
            <person name="Begum S."/>
            <person name="Mortimore B."/>
            <person name="Kerry G."/>
            <person name="Heath P."/>
            <person name="Phillimore B."/>
            <person name="Tracey A."/>
            <person name="Corby N."/>
            <person name="Dunn M."/>
            <person name="Johnson C."/>
            <person name="Wood J."/>
            <person name="Clark S."/>
            <person name="Pelan S."/>
            <person name="Griffiths G."/>
            <person name="Smith M."/>
            <person name="Glithero R."/>
            <person name="Howden P."/>
            <person name="Barker N."/>
            <person name="Lloyd C."/>
            <person name="Stevens C."/>
            <person name="Harley J."/>
            <person name="Holt K."/>
            <person name="Panagiotidis G."/>
            <person name="Lovell J."/>
            <person name="Beasley H."/>
            <person name="Henderson C."/>
            <person name="Gordon D."/>
            <person name="Auger K."/>
            <person name="Wright D."/>
            <person name="Collins J."/>
            <person name="Raisen C."/>
            <person name="Dyer L."/>
            <person name="Leung K."/>
            <person name="Robertson L."/>
            <person name="Ambridge K."/>
            <person name="Leongamornlert D."/>
            <person name="McGuire S."/>
            <person name="Gilderthorp R."/>
            <person name="Griffiths C."/>
            <person name="Manthravadi D."/>
            <person name="Nichol S."/>
            <person name="Barker G."/>
            <person name="Whitehead S."/>
            <person name="Kay M."/>
            <person name="Brown J."/>
            <person name="Murnane C."/>
            <person name="Gray E."/>
            <person name="Humphries M."/>
            <person name="Sycamore N."/>
            <person name="Barker D."/>
            <person name="Saunders D."/>
            <person name="Wallis J."/>
            <person name="Babbage A."/>
            <person name="Hammond S."/>
            <person name="Mashreghi-Mohammadi M."/>
            <person name="Barr L."/>
            <person name="Martin S."/>
            <person name="Wray P."/>
            <person name="Ellington A."/>
            <person name="Matthews N."/>
            <person name="Ellwood M."/>
            <person name="Woodmansey R."/>
            <person name="Clark G."/>
            <person name="Cooper J."/>
            <person name="Tromans A."/>
            <person name="Grafham D."/>
            <person name="Skuce C."/>
            <person name="Pandian R."/>
            <person name="Andrews R."/>
            <person name="Harrison E."/>
            <person name="Kimberley A."/>
            <person name="Garnett J."/>
            <person name="Fosker N."/>
            <person name="Hall R."/>
            <person name="Garner P."/>
            <person name="Kelly D."/>
            <person name="Bird C."/>
            <person name="Palmer S."/>
            <person name="Gehring I."/>
            <person name="Berger A."/>
            <person name="Dooley C.M."/>
            <person name="Ersan-Urun Z."/>
            <person name="Eser C."/>
            <person name="Geiger H."/>
            <person name="Geisler M."/>
            <person name="Karotki L."/>
            <person name="Kirn A."/>
            <person name="Konantz J."/>
            <person name="Konantz M."/>
            <person name="Oberlander M."/>
            <person name="Rudolph-Geiger S."/>
            <person name="Teucke M."/>
            <person name="Lanz C."/>
            <person name="Raddatz G."/>
            <person name="Osoegawa K."/>
            <person name="Zhu B."/>
            <person name="Rapp A."/>
            <person name="Widaa S."/>
            <person name="Langford C."/>
            <person name="Yang F."/>
            <person name="Schuster S.C."/>
            <person name="Carter N.P."/>
            <person name="Harrow J."/>
            <person name="Ning Z."/>
            <person name="Herrero J."/>
            <person name="Searle S.M."/>
            <person name="Enright A."/>
            <person name="Geisler R."/>
            <person name="Plasterk R.H."/>
            <person name="Lee C."/>
            <person name="Westerfield M."/>
            <person name="de Jong P.J."/>
            <person name="Zon L.I."/>
            <person name="Postlethwait J.H."/>
            <person name="Nusslein-Volhard C."/>
            <person name="Hubbard T.J."/>
            <person name="Roest Crollius H."/>
            <person name="Rogers J."/>
            <person name="Stemple D.L."/>
        </authorList>
    </citation>
    <scope>NUCLEOTIDE SEQUENCE [LARGE SCALE GENOMIC DNA]</scope>
    <source>
        <strain>Tuebingen</strain>
    </source>
</reference>
<reference key="2">
    <citation type="submission" date="2005-11" db="EMBL/GenBank/DDBJ databases">
        <authorList>
            <consortium name="NIH - Zebrafish Gene Collection (ZGC) project"/>
        </authorList>
    </citation>
    <scope>NUCLEOTIDE SEQUENCE [LARGE SCALE MRNA] (ISOFORM 1)</scope>
    <source>
        <tissue>Olfactory epithelium</tissue>
    </source>
</reference>
<reference key="3">
    <citation type="journal article" date="2008" name="Cell">
        <title>Structural basis of UV DNA-damage recognition by the DDB1-DDB2 complex.</title>
        <authorList>
            <person name="Scrima A."/>
            <person name="Konickova R."/>
            <person name="Czyzewski B.K."/>
            <person name="Kawasaki Y."/>
            <person name="Jeffrey P.D."/>
            <person name="Groisman R."/>
            <person name="Nakatani Y."/>
            <person name="Iwai S."/>
            <person name="Pavletich N.P."/>
            <person name="Thoma N.H."/>
        </authorList>
    </citation>
    <scope>X-RAY CRYSTALLOGRAPHY (2.3 ANGSTROMS) OF 60-423 IN COMPLEX WITH DDB1</scope>
    <scope>SUBUNIT</scope>
    <scope>WD REPEATS</scope>
</reference>
<reference key="4">
    <citation type="journal article" date="2011" name="Cell">
        <title>The molecular basis of CRL4DDB2/CSA ubiquitin ligase architecture, targeting, and activation.</title>
        <authorList>
            <person name="Fischer E.S."/>
            <person name="Scrima A."/>
            <person name="Bohm K."/>
            <person name="Matsumoto S."/>
            <person name="Lingaraju G.M."/>
            <person name="Faty M."/>
            <person name="Yasuda T."/>
            <person name="Cavadini S."/>
            <person name="Wakasugi M."/>
            <person name="Hanaoka F."/>
            <person name="Iwai S."/>
            <person name="Gut H."/>
            <person name="Sugasawa K."/>
            <person name="Thoma N.H."/>
        </authorList>
    </citation>
    <scope>X-RAY CRYSTALLOGRAPHY (3.00 ANGSTROMS) OF 60-423 IN COMPLEXES WITH DDB1 AND RBX1</scope>
    <scope>SUBUNIT</scope>
</reference>
<evidence type="ECO:0000250" key="1">
    <source>
        <dbReference type="UniProtKB" id="Q92466"/>
    </source>
</evidence>
<evidence type="ECO:0000256" key="2">
    <source>
        <dbReference type="SAM" id="MobiDB-lite"/>
    </source>
</evidence>
<evidence type="ECO:0000269" key="3">
    <source>
    </source>
</evidence>
<evidence type="ECO:0000269" key="4">
    <source>
    </source>
</evidence>
<evidence type="ECO:0000305" key="5"/>
<evidence type="ECO:0007829" key="6">
    <source>
        <dbReference type="PDB" id="3EI1"/>
    </source>
</evidence>
<evidence type="ECO:0007829" key="7">
    <source>
        <dbReference type="PDB" id="3EI2"/>
    </source>
</evidence>
<evidence type="ECO:0007829" key="8">
    <source>
        <dbReference type="PDB" id="3EI3"/>
    </source>
</evidence>
<evidence type="ECO:0007829" key="9">
    <source>
        <dbReference type="PDB" id="4A08"/>
    </source>
</evidence>